<organism>
    <name type="scientific">Salmonella paratyphi A (strain ATCC 9150 / SARB42)</name>
    <dbReference type="NCBI Taxonomy" id="295319"/>
    <lineage>
        <taxon>Bacteria</taxon>
        <taxon>Pseudomonadati</taxon>
        <taxon>Pseudomonadota</taxon>
        <taxon>Gammaproteobacteria</taxon>
        <taxon>Enterobacterales</taxon>
        <taxon>Enterobacteriaceae</taxon>
        <taxon>Salmonella</taxon>
    </lineage>
</organism>
<feature type="chain" id="PRO_0000049418" description="DNA replication terminus site-binding protein">
    <location>
        <begin position="1"/>
        <end position="309"/>
    </location>
</feature>
<comment type="function">
    <text evidence="1">Trans-acting protein required for termination of DNA replication. Binds to DNA replication terminator sequences (terA to terF) to prevent the passage of replication forks. The termination efficiency will be affected by the affinity of this protein for the terminator sequence.</text>
</comment>
<comment type="subcellular location">
    <subcellularLocation>
        <location evidence="1">Cytoplasm</location>
    </subcellularLocation>
</comment>
<comment type="similarity">
    <text evidence="1">Belongs to the Tus family.</text>
</comment>
<keyword id="KW-0963">Cytoplasm</keyword>
<keyword id="KW-0235">DNA replication</keyword>
<keyword id="KW-0238">DNA-binding</keyword>
<evidence type="ECO:0000255" key="1">
    <source>
        <dbReference type="HAMAP-Rule" id="MF_00483"/>
    </source>
</evidence>
<sequence length="309" mass="35485">MSRYDLVERLNGTFRQIEQHLAALTDNLQQHSLLIARIFSLPQVTKEAEHAPLDTIEVTQHLGKEAEALALRHYRHLFIQQQSENRSSKAAVRLPGVLCYQVDNATQLDLENQIQRINQLKTTFEQMVTVESGLPSAARFEWVHRHLPGLITLNAYRTLTLINNPATIRFGWANKHIIKNLSRDEVLSQLKKSLASPRSVPPWTREQWQFKLEREYQDIAALPQQARLKIKRPVKVQPIARIWYKGQQKQVQHACPTPIIALINTDNGAGVPDIGGLENYDADNIQHRFKPQAQPLRLIIPRLHLYVAD</sequence>
<dbReference type="EMBL" id="CP000026">
    <property type="protein sequence ID" value="AAV77327.1"/>
    <property type="molecule type" value="Genomic_DNA"/>
</dbReference>
<dbReference type="RefSeq" id="WP_000092484.1">
    <property type="nucleotide sequence ID" value="NC_006511.1"/>
</dbReference>
<dbReference type="SMR" id="Q5PIB8"/>
<dbReference type="KEGG" id="spt:SPA1385"/>
<dbReference type="HOGENOM" id="CLU_078181_0_0_6"/>
<dbReference type="Proteomes" id="UP000008185">
    <property type="component" value="Chromosome"/>
</dbReference>
<dbReference type="GO" id="GO:0005737">
    <property type="term" value="C:cytoplasm"/>
    <property type="evidence" value="ECO:0007669"/>
    <property type="project" value="UniProtKB-SubCell"/>
</dbReference>
<dbReference type="GO" id="GO:0003677">
    <property type="term" value="F:DNA binding"/>
    <property type="evidence" value="ECO:0007669"/>
    <property type="project" value="UniProtKB-UniRule"/>
</dbReference>
<dbReference type="GO" id="GO:0006274">
    <property type="term" value="P:DNA replication termination"/>
    <property type="evidence" value="ECO:0007669"/>
    <property type="project" value="UniProtKB-UniRule"/>
</dbReference>
<dbReference type="Gene3D" id="3.30.54.10">
    <property type="match status" value="1"/>
</dbReference>
<dbReference type="Gene3D" id="3.50.14.10">
    <property type="entry name" value="Replication terminator Tus, domain 1 superfamily/Replication terminator Tus"/>
    <property type="match status" value="1"/>
</dbReference>
<dbReference type="HAMAP" id="MF_00483">
    <property type="entry name" value="Rep_term_Tus"/>
    <property type="match status" value="1"/>
</dbReference>
<dbReference type="InterPro" id="IPR008865">
    <property type="entry name" value="DNA_replication_term_site-bd"/>
</dbReference>
<dbReference type="InterPro" id="IPR036381">
    <property type="entry name" value="Tus_dom1"/>
</dbReference>
<dbReference type="InterPro" id="IPR036384">
    <property type="entry name" value="Tus_sf"/>
</dbReference>
<dbReference type="NCBIfam" id="TIGR02648">
    <property type="entry name" value="rep_term_tus"/>
    <property type="match status" value="1"/>
</dbReference>
<dbReference type="Pfam" id="PF05472">
    <property type="entry name" value="Ter"/>
    <property type="match status" value="1"/>
</dbReference>
<dbReference type="SUPFAM" id="SSF56596">
    <property type="entry name" value="Replication terminator protein (Tus)"/>
    <property type="match status" value="1"/>
</dbReference>
<proteinExistence type="inferred from homology"/>
<reference key="1">
    <citation type="journal article" date="2004" name="Nat. Genet.">
        <title>Comparison of genome degradation in Paratyphi A and Typhi, human-restricted serovars of Salmonella enterica that cause typhoid.</title>
        <authorList>
            <person name="McClelland M."/>
            <person name="Sanderson K.E."/>
            <person name="Clifton S.W."/>
            <person name="Latreille P."/>
            <person name="Porwollik S."/>
            <person name="Sabo A."/>
            <person name="Meyer R."/>
            <person name="Bieri T."/>
            <person name="Ozersky P."/>
            <person name="McLellan M."/>
            <person name="Harkins C.R."/>
            <person name="Wang C."/>
            <person name="Nguyen C."/>
            <person name="Berghoff A."/>
            <person name="Elliott G."/>
            <person name="Kohlberg S."/>
            <person name="Strong C."/>
            <person name="Du F."/>
            <person name="Carter J."/>
            <person name="Kremizki C."/>
            <person name="Layman D."/>
            <person name="Leonard S."/>
            <person name="Sun H."/>
            <person name="Fulton L."/>
            <person name="Nash W."/>
            <person name="Miner T."/>
            <person name="Minx P."/>
            <person name="Delehaunty K."/>
            <person name="Fronick C."/>
            <person name="Magrini V."/>
            <person name="Nhan M."/>
            <person name="Warren W."/>
            <person name="Florea L."/>
            <person name="Spieth J."/>
            <person name="Wilson R.K."/>
        </authorList>
    </citation>
    <scope>NUCLEOTIDE SEQUENCE [LARGE SCALE GENOMIC DNA]</scope>
    <source>
        <strain>ATCC 9150 / SARB42</strain>
    </source>
</reference>
<accession>Q5PIB8</accession>
<name>TUS_SALPA</name>
<protein>
    <recommendedName>
        <fullName evidence="1">DNA replication terminus site-binding protein</fullName>
        <shortName evidence="1">Ter-binding protein</shortName>
    </recommendedName>
</protein>
<gene>
    <name evidence="1" type="primary">tus</name>
    <name type="ordered locus">SPA1385</name>
</gene>